<gene>
    <name evidence="1" type="primary">pgi</name>
    <name type="ordered locus">Helmi_06520</name>
    <name type="ORF">HM1_1300</name>
</gene>
<reference key="1">
    <citation type="journal article" date="2008" name="J. Bacteriol.">
        <title>The genome of Heliobacterium modesticaldum, a phototrophic representative of the Firmicutes containing the simplest photosynthetic apparatus.</title>
        <authorList>
            <person name="Sattley W.M."/>
            <person name="Madigan M.T."/>
            <person name="Swingley W.D."/>
            <person name="Cheung P.C."/>
            <person name="Clocksin K.M."/>
            <person name="Conrad A.L."/>
            <person name="Dejesa L.C."/>
            <person name="Honchak B.M."/>
            <person name="Jung D.O."/>
            <person name="Karbach L.E."/>
            <person name="Kurdoglu A."/>
            <person name="Lahiri S."/>
            <person name="Mastrian S.D."/>
            <person name="Page L.E."/>
            <person name="Taylor H.L."/>
            <person name="Wang Z.T."/>
            <person name="Raymond J."/>
            <person name="Chen M."/>
            <person name="Blankenship R.E."/>
            <person name="Touchman J.W."/>
        </authorList>
    </citation>
    <scope>NUCLEOTIDE SEQUENCE [LARGE SCALE GENOMIC DNA]</scope>
    <source>
        <strain>ATCC 51547 / Ice1</strain>
    </source>
</reference>
<feature type="chain" id="PRO_1000125729" description="Glucose-6-phosphate isomerase">
    <location>
        <begin position="1"/>
        <end position="447"/>
    </location>
</feature>
<feature type="active site" description="Proton donor" evidence="1">
    <location>
        <position position="287"/>
    </location>
</feature>
<feature type="active site" evidence="1">
    <location>
        <position position="308"/>
    </location>
</feature>
<feature type="active site" evidence="1">
    <location>
        <position position="422"/>
    </location>
</feature>
<dbReference type="EC" id="5.3.1.9" evidence="1"/>
<dbReference type="EMBL" id="CP000930">
    <property type="protein sequence ID" value="ABZ83277.1"/>
    <property type="molecule type" value="Genomic_DNA"/>
</dbReference>
<dbReference type="RefSeq" id="WP_012281811.1">
    <property type="nucleotide sequence ID" value="NC_010337.2"/>
</dbReference>
<dbReference type="SMR" id="B0TGL6"/>
<dbReference type="STRING" id="498761.HM1_1300"/>
<dbReference type="KEGG" id="hmo:HM1_1300"/>
<dbReference type="eggNOG" id="COG0166">
    <property type="taxonomic scope" value="Bacteria"/>
</dbReference>
<dbReference type="HOGENOM" id="CLU_037303_0_1_9"/>
<dbReference type="OrthoDB" id="140919at2"/>
<dbReference type="UniPathway" id="UPA00109">
    <property type="reaction ID" value="UER00181"/>
</dbReference>
<dbReference type="UniPathway" id="UPA00138"/>
<dbReference type="Proteomes" id="UP000008550">
    <property type="component" value="Chromosome"/>
</dbReference>
<dbReference type="GO" id="GO:0005829">
    <property type="term" value="C:cytosol"/>
    <property type="evidence" value="ECO:0007669"/>
    <property type="project" value="TreeGrafter"/>
</dbReference>
<dbReference type="GO" id="GO:0097367">
    <property type="term" value="F:carbohydrate derivative binding"/>
    <property type="evidence" value="ECO:0007669"/>
    <property type="project" value="InterPro"/>
</dbReference>
<dbReference type="GO" id="GO:0004347">
    <property type="term" value="F:glucose-6-phosphate isomerase activity"/>
    <property type="evidence" value="ECO:0007669"/>
    <property type="project" value="UniProtKB-UniRule"/>
</dbReference>
<dbReference type="GO" id="GO:0048029">
    <property type="term" value="F:monosaccharide binding"/>
    <property type="evidence" value="ECO:0007669"/>
    <property type="project" value="TreeGrafter"/>
</dbReference>
<dbReference type="GO" id="GO:0006094">
    <property type="term" value="P:gluconeogenesis"/>
    <property type="evidence" value="ECO:0007669"/>
    <property type="project" value="UniProtKB-UniRule"/>
</dbReference>
<dbReference type="GO" id="GO:0051156">
    <property type="term" value="P:glucose 6-phosphate metabolic process"/>
    <property type="evidence" value="ECO:0007669"/>
    <property type="project" value="TreeGrafter"/>
</dbReference>
<dbReference type="GO" id="GO:0006096">
    <property type="term" value="P:glycolytic process"/>
    <property type="evidence" value="ECO:0007669"/>
    <property type="project" value="UniProtKB-UniRule"/>
</dbReference>
<dbReference type="CDD" id="cd05015">
    <property type="entry name" value="SIS_PGI_1"/>
    <property type="match status" value="1"/>
</dbReference>
<dbReference type="CDD" id="cd05016">
    <property type="entry name" value="SIS_PGI_2"/>
    <property type="match status" value="1"/>
</dbReference>
<dbReference type="FunFam" id="3.40.50.10490:FF:000015">
    <property type="entry name" value="Glucose-6-phosphate isomerase"/>
    <property type="match status" value="1"/>
</dbReference>
<dbReference type="FunFam" id="3.40.50.10490:FF:000016">
    <property type="entry name" value="Glucose-6-phosphate isomerase"/>
    <property type="match status" value="1"/>
</dbReference>
<dbReference type="Gene3D" id="3.40.50.10490">
    <property type="entry name" value="Glucose-6-phosphate isomerase like protein, domain 1"/>
    <property type="match status" value="2"/>
</dbReference>
<dbReference type="HAMAP" id="MF_00473">
    <property type="entry name" value="G6P_isomerase"/>
    <property type="match status" value="1"/>
</dbReference>
<dbReference type="InterPro" id="IPR001672">
    <property type="entry name" value="G6P_Isomerase"/>
</dbReference>
<dbReference type="InterPro" id="IPR018189">
    <property type="entry name" value="Phosphoglucose_isomerase_CS"/>
</dbReference>
<dbReference type="InterPro" id="IPR046348">
    <property type="entry name" value="SIS_dom_sf"/>
</dbReference>
<dbReference type="InterPro" id="IPR035476">
    <property type="entry name" value="SIS_PGI_1"/>
</dbReference>
<dbReference type="InterPro" id="IPR035482">
    <property type="entry name" value="SIS_PGI_2"/>
</dbReference>
<dbReference type="NCBIfam" id="NF010697">
    <property type="entry name" value="PRK14097.1"/>
    <property type="match status" value="1"/>
</dbReference>
<dbReference type="PANTHER" id="PTHR11469">
    <property type="entry name" value="GLUCOSE-6-PHOSPHATE ISOMERASE"/>
    <property type="match status" value="1"/>
</dbReference>
<dbReference type="PANTHER" id="PTHR11469:SF1">
    <property type="entry name" value="GLUCOSE-6-PHOSPHATE ISOMERASE"/>
    <property type="match status" value="1"/>
</dbReference>
<dbReference type="Pfam" id="PF00342">
    <property type="entry name" value="PGI"/>
    <property type="match status" value="1"/>
</dbReference>
<dbReference type="PRINTS" id="PR00662">
    <property type="entry name" value="G6PISOMERASE"/>
</dbReference>
<dbReference type="SUPFAM" id="SSF53697">
    <property type="entry name" value="SIS domain"/>
    <property type="match status" value="1"/>
</dbReference>
<dbReference type="PROSITE" id="PS00765">
    <property type="entry name" value="P_GLUCOSE_ISOMERASE_1"/>
    <property type="match status" value="1"/>
</dbReference>
<dbReference type="PROSITE" id="PS00174">
    <property type="entry name" value="P_GLUCOSE_ISOMERASE_2"/>
    <property type="match status" value="1"/>
</dbReference>
<dbReference type="PROSITE" id="PS51463">
    <property type="entry name" value="P_GLUCOSE_ISOMERASE_3"/>
    <property type="match status" value="1"/>
</dbReference>
<comment type="function">
    <text evidence="1">Catalyzes the reversible isomerization of glucose-6-phosphate to fructose-6-phosphate.</text>
</comment>
<comment type="catalytic activity">
    <reaction evidence="1">
        <text>alpha-D-glucose 6-phosphate = beta-D-fructose 6-phosphate</text>
        <dbReference type="Rhea" id="RHEA:11816"/>
        <dbReference type="ChEBI" id="CHEBI:57634"/>
        <dbReference type="ChEBI" id="CHEBI:58225"/>
        <dbReference type="EC" id="5.3.1.9"/>
    </reaction>
</comment>
<comment type="pathway">
    <text evidence="1">Carbohydrate biosynthesis; gluconeogenesis.</text>
</comment>
<comment type="pathway">
    <text evidence="1">Carbohydrate degradation; glycolysis; D-glyceraldehyde 3-phosphate and glycerone phosphate from D-glucose: step 2/4.</text>
</comment>
<comment type="subcellular location">
    <subcellularLocation>
        <location evidence="1">Cytoplasm</location>
    </subcellularLocation>
</comment>
<comment type="similarity">
    <text evidence="1">Belongs to the GPI family.</text>
</comment>
<organism>
    <name type="scientific">Heliobacterium modesticaldum (strain ATCC 51547 / Ice1)</name>
    <dbReference type="NCBI Taxonomy" id="498761"/>
    <lineage>
        <taxon>Bacteria</taxon>
        <taxon>Bacillati</taxon>
        <taxon>Bacillota</taxon>
        <taxon>Clostridia</taxon>
        <taxon>Eubacteriales</taxon>
        <taxon>Heliobacteriaceae</taxon>
        <taxon>Heliomicrobium</taxon>
    </lineage>
</organism>
<protein>
    <recommendedName>
        <fullName evidence="1">Glucose-6-phosphate isomerase</fullName>
        <shortName evidence="1">GPI</shortName>
        <ecNumber evidence="1">5.3.1.9</ecNumber>
    </recommendedName>
    <alternativeName>
        <fullName evidence="1">Phosphoglucose isomerase</fullName>
        <shortName evidence="1">PGI</shortName>
    </alternativeName>
    <alternativeName>
        <fullName evidence="1">Phosphohexose isomerase</fullName>
        <shortName evidence="1">PHI</shortName>
    </alternativeName>
</protein>
<proteinExistence type="inferred from homology"/>
<keyword id="KW-0963">Cytoplasm</keyword>
<keyword id="KW-0312">Gluconeogenesis</keyword>
<keyword id="KW-0324">Glycolysis</keyword>
<keyword id="KW-0413">Isomerase</keyword>
<keyword id="KW-1185">Reference proteome</keyword>
<evidence type="ECO:0000255" key="1">
    <source>
        <dbReference type="HAMAP-Rule" id="MF_00473"/>
    </source>
</evidence>
<accession>B0TGL6</accession>
<sequence length="447" mass="49388">MSSLRLDLAYATVESAISTMEDPIRQAHDLLHNRTGAGSEFTGWLQLPKTYDRAEFARIIDAADRIRASSDVLLVIGIGGSYLGARAAIDMLSHSFHNQLPRSRRPGCAVLFAGHNISSAYLSDLFDILDGKDVSVNVISKSGTTTEPAIAFRLIRRWMEKKYSPDEVRRRIFATTDRAKGALKRLADEQGYETFVVPDDVGGRFSVLTTVGLLPIAAAGIDITALLAGARDAMAEYANPSLATNACYRYAAARNLLYRQGKQVELFVAYEPSLQHLAEWWKQLYGESEGKEGKGIFPASVLFSTDLHSMGQYIQEGQRMLMETVVRFDKPRRELTIPPAEDDSDGLNFLAGKTVDFVNQKAFAGTLLAHVDGQVPNMIISVPEQNAYHLGQLFYFFEKACGVSGYLLGVNPFDQPGVESYKRNMFALLGKPGFEKEKAALEARLPR</sequence>
<name>G6PI_HELMI</name>